<evidence type="ECO:0000255" key="1">
    <source>
        <dbReference type="HAMAP-Rule" id="MF_00276"/>
    </source>
</evidence>
<reference key="1">
    <citation type="journal article" date="2008" name="J. Bacteriol.">
        <title>The complete genome sequence of Escherichia coli DH10B: insights into the biology of a laboratory workhorse.</title>
        <authorList>
            <person name="Durfee T."/>
            <person name="Nelson R."/>
            <person name="Baldwin S."/>
            <person name="Plunkett G. III"/>
            <person name="Burland V."/>
            <person name="Mau B."/>
            <person name="Petrosino J.F."/>
            <person name="Qin X."/>
            <person name="Muzny D.M."/>
            <person name="Ayele M."/>
            <person name="Gibbs R.A."/>
            <person name="Csorgo B."/>
            <person name="Posfai G."/>
            <person name="Weinstock G.M."/>
            <person name="Blattner F.R."/>
        </authorList>
    </citation>
    <scope>NUCLEOTIDE SEQUENCE [LARGE SCALE GENOMIC DNA]</scope>
    <source>
        <strain>K12 / DH10B</strain>
    </source>
</reference>
<gene>
    <name evidence="1" type="primary">kdpC</name>
    <name type="ordered locus">ECDH10B_0762</name>
</gene>
<accession>B1X6M7</accession>
<comment type="function">
    <text evidence="1">Part of the high-affinity ATP-driven potassium transport (or Kdp) system, which catalyzes the hydrolysis of ATP coupled with the electrogenic transport of potassium into the cytoplasm. This subunit acts as a catalytic chaperone that increases the ATP-binding affinity of the ATP-hydrolyzing subunit KdpB by the formation of a transient KdpB/KdpC/ATP ternary complex.</text>
</comment>
<comment type="subunit">
    <text evidence="1">The system is composed of three essential subunits: KdpA, KdpB and KdpC.</text>
</comment>
<comment type="subcellular location">
    <subcellularLocation>
        <location evidence="1">Cell inner membrane</location>
        <topology evidence="1">Single-pass membrane protein</topology>
    </subcellularLocation>
</comment>
<comment type="similarity">
    <text evidence="1">Belongs to the KdpC family.</text>
</comment>
<name>KDPC_ECODH</name>
<organism>
    <name type="scientific">Escherichia coli (strain K12 / DH10B)</name>
    <dbReference type="NCBI Taxonomy" id="316385"/>
    <lineage>
        <taxon>Bacteria</taxon>
        <taxon>Pseudomonadati</taxon>
        <taxon>Pseudomonadota</taxon>
        <taxon>Gammaproteobacteria</taxon>
        <taxon>Enterobacterales</taxon>
        <taxon>Enterobacteriaceae</taxon>
        <taxon>Escherichia</taxon>
    </lineage>
</organism>
<feature type="chain" id="PRO_1000114722" description="Potassium-transporting ATPase KdpC subunit">
    <location>
        <begin position="1"/>
        <end position="190"/>
    </location>
</feature>
<feature type="transmembrane region" description="Helical" evidence="1">
    <location>
        <begin position="10"/>
        <end position="30"/>
    </location>
</feature>
<sequence>MSGLRPALSTFIFLLLITGGVYPLLTTVLGQWWFPWQANGSLIREGDTVRGSALIGQNFTGNGYFHGRPSATAEMPYNPQASGGSNLAVSNPELDKLIAARVAALRAANPDASASVPVELVTASASGLDNNITPQAAAWQIPRVAKARNLSVEQLTQLIAKYSQQPLVKYIGQPVVNIVELNLALDKLDE</sequence>
<dbReference type="EMBL" id="CP000948">
    <property type="protein sequence ID" value="ACB01905.1"/>
    <property type="molecule type" value="Genomic_DNA"/>
</dbReference>
<dbReference type="RefSeq" id="WP_001300431.1">
    <property type="nucleotide sequence ID" value="NC_010473.1"/>
</dbReference>
<dbReference type="SMR" id="B1X6M7"/>
<dbReference type="KEGG" id="ecd:ECDH10B_0762"/>
<dbReference type="HOGENOM" id="CLU_077094_2_0_6"/>
<dbReference type="GO" id="GO:0005886">
    <property type="term" value="C:plasma membrane"/>
    <property type="evidence" value="ECO:0007669"/>
    <property type="project" value="UniProtKB-SubCell"/>
</dbReference>
<dbReference type="GO" id="GO:0005524">
    <property type="term" value="F:ATP binding"/>
    <property type="evidence" value="ECO:0007669"/>
    <property type="project" value="UniProtKB-UniRule"/>
</dbReference>
<dbReference type="GO" id="GO:0008556">
    <property type="term" value="F:P-type potassium transmembrane transporter activity"/>
    <property type="evidence" value="ECO:0007669"/>
    <property type="project" value="InterPro"/>
</dbReference>
<dbReference type="HAMAP" id="MF_00276">
    <property type="entry name" value="KdpC"/>
    <property type="match status" value="1"/>
</dbReference>
<dbReference type="InterPro" id="IPR003820">
    <property type="entry name" value="KdpC"/>
</dbReference>
<dbReference type="NCBIfam" id="TIGR00681">
    <property type="entry name" value="kdpC"/>
    <property type="match status" value="1"/>
</dbReference>
<dbReference type="NCBIfam" id="NF001454">
    <property type="entry name" value="PRK00315.1"/>
    <property type="match status" value="1"/>
</dbReference>
<dbReference type="PANTHER" id="PTHR30042">
    <property type="entry name" value="POTASSIUM-TRANSPORTING ATPASE C CHAIN"/>
    <property type="match status" value="1"/>
</dbReference>
<dbReference type="PANTHER" id="PTHR30042:SF2">
    <property type="entry name" value="POTASSIUM-TRANSPORTING ATPASE KDPC SUBUNIT"/>
    <property type="match status" value="1"/>
</dbReference>
<dbReference type="Pfam" id="PF02669">
    <property type="entry name" value="KdpC"/>
    <property type="match status" value="1"/>
</dbReference>
<dbReference type="PIRSF" id="PIRSF001296">
    <property type="entry name" value="K_ATPase_KdpC"/>
    <property type="match status" value="1"/>
</dbReference>
<proteinExistence type="inferred from homology"/>
<keyword id="KW-0067">ATP-binding</keyword>
<keyword id="KW-0997">Cell inner membrane</keyword>
<keyword id="KW-1003">Cell membrane</keyword>
<keyword id="KW-0406">Ion transport</keyword>
<keyword id="KW-0472">Membrane</keyword>
<keyword id="KW-0547">Nucleotide-binding</keyword>
<keyword id="KW-0630">Potassium</keyword>
<keyword id="KW-0633">Potassium transport</keyword>
<keyword id="KW-0812">Transmembrane</keyword>
<keyword id="KW-1133">Transmembrane helix</keyword>
<keyword id="KW-0813">Transport</keyword>
<protein>
    <recommendedName>
        <fullName evidence="1">Potassium-transporting ATPase KdpC subunit</fullName>
    </recommendedName>
    <alternativeName>
        <fullName evidence="1">ATP phosphohydrolase [potassium-transporting] C chain</fullName>
    </alternativeName>
    <alternativeName>
        <fullName evidence="1">Potassium-binding and translocating subunit C</fullName>
    </alternativeName>
    <alternativeName>
        <fullName evidence="1">Potassium-translocating ATPase C chain</fullName>
    </alternativeName>
</protein>